<reference key="1">
    <citation type="submission" date="1997-09" db="EMBL/GenBank/DDBJ databases">
        <authorList>
            <person name="Siminszky B."/>
            <person name="Dewey R.E."/>
            <person name="Corbin F.T."/>
        </authorList>
    </citation>
    <scope>NUCLEOTIDE SEQUENCE [MRNA]</scope>
</reference>
<proteinExistence type="evidence at transcript level"/>
<accession>O48923</accession>
<organism>
    <name type="scientific">Glycine max</name>
    <name type="common">Soybean</name>
    <name type="synonym">Glycine hispida</name>
    <dbReference type="NCBI Taxonomy" id="3847"/>
    <lineage>
        <taxon>Eukaryota</taxon>
        <taxon>Viridiplantae</taxon>
        <taxon>Streptophyta</taxon>
        <taxon>Embryophyta</taxon>
        <taxon>Tracheophyta</taxon>
        <taxon>Spermatophyta</taxon>
        <taxon>Magnoliopsida</taxon>
        <taxon>eudicotyledons</taxon>
        <taxon>Gunneridae</taxon>
        <taxon>Pentapetalae</taxon>
        <taxon>rosids</taxon>
        <taxon>fabids</taxon>
        <taxon>Fabales</taxon>
        <taxon>Fabaceae</taxon>
        <taxon>Papilionoideae</taxon>
        <taxon>50 kb inversion clade</taxon>
        <taxon>NPAAA clade</taxon>
        <taxon>indigoferoid/millettioid clade</taxon>
        <taxon>Phaseoleae</taxon>
        <taxon>Glycine</taxon>
        <taxon>Glycine subgen. Soja</taxon>
    </lineage>
</organism>
<name>C71DA_SOYBN</name>
<sequence>MVMELHNHTPFSIYFITSILFIFFVFFKLVQRSDSKTSSTCKLPPGPRTLPLIGNIHQIVGSLPVHYYLKNLADKYGPLMHLKLGEVSNIIVTSPEMAQEIMKTHDLNFSDRPDFVLSRIVSYNGSGIVFSQHGDYWRQLRKICTVELLTAKRVQSFRSIREEEVAELVKKIAATASEEGGSIFNLTQSIYSMTFGIAARAAFGKKSRYQQVFISNMHKQLMLLGGFSVADLYPSSRVFQMMGATGKLEKVHRVTDRVLQDIIDEHKNRNRSSEEREAVEDLVDVLLKFQKESEFRLTDDNIKAVIQDIFIGGGETSSSVVEWGMSELIRNPRVMEEAQAEVRRVYDSKGYVDETELHQLIYLKSIIKETMRLHPPVPLLVPRVSRERCQINGYEIPSKTRIIINAWAIGRNPKYWGETESFKPERFLNSSIDFRGTDFEFIPFGAGRRICPGITFAIPNIELPLAQLLYHFDWKLPNKMKNEELDMTESNGITLRRQNDLCLIPITRLP</sequence>
<feature type="chain" id="PRO_0000052121" description="Cytochrome P450 71D10">
    <location>
        <begin position="1"/>
        <end position="510"/>
    </location>
</feature>
<feature type="binding site" description="axial binding residue" evidence="1">
    <location>
        <position position="451"/>
    </location>
    <ligand>
        <name>heme</name>
        <dbReference type="ChEBI" id="CHEBI:30413"/>
    </ligand>
    <ligandPart>
        <name>Fe</name>
        <dbReference type="ChEBI" id="CHEBI:18248"/>
    </ligandPart>
</feature>
<evidence type="ECO:0000250" key="1"/>
<evidence type="ECO:0000305" key="2"/>
<dbReference type="EC" id="1.14.-.-"/>
<dbReference type="EMBL" id="AF022459">
    <property type="protein sequence ID" value="AAB94588.1"/>
    <property type="molecule type" value="mRNA"/>
</dbReference>
<dbReference type="PIR" id="T05939">
    <property type="entry name" value="T05939"/>
</dbReference>
<dbReference type="RefSeq" id="NP_001236165.1">
    <property type="nucleotide sequence ID" value="NM_001249236.2"/>
</dbReference>
<dbReference type="SMR" id="O48923"/>
<dbReference type="STRING" id="3847.O48923"/>
<dbReference type="PaxDb" id="3847-GLYMA15G05580.1"/>
<dbReference type="EnsemblPlants" id="KRH10485">
    <property type="protein sequence ID" value="KRH10485"/>
    <property type="gene ID" value="GLYMA_15G050300"/>
</dbReference>
<dbReference type="GeneID" id="606548"/>
<dbReference type="Gramene" id="KRH10485">
    <property type="protein sequence ID" value="KRH10485"/>
    <property type="gene ID" value="GLYMA_15G050300"/>
</dbReference>
<dbReference type="KEGG" id="gmx:606548"/>
<dbReference type="eggNOG" id="KOG0156">
    <property type="taxonomic scope" value="Eukaryota"/>
</dbReference>
<dbReference type="HOGENOM" id="CLU_001570_4_1_1"/>
<dbReference type="InParanoid" id="O48923"/>
<dbReference type="OMA" id="PLFHIFI"/>
<dbReference type="OrthoDB" id="2789670at2759"/>
<dbReference type="Proteomes" id="UP000008827">
    <property type="component" value="Chromosome 15"/>
</dbReference>
<dbReference type="GO" id="GO:0020037">
    <property type="term" value="F:heme binding"/>
    <property type="evidence" value="ECO:0007669"/>
    <property type="project" value="InterPro"/>
</dbReference>
<dbReference type="GO" id="GO:0005506">
    <property type="term" value="F:iron ion binding"/>
    <property type="evidence" value="ECO:0007669"/>
    <property type="project" value="InterPro"/>
</dbReference>
<dbReference type="GO" id="GO:0004497">
    <property type="term" value="F:monooxygenase activity"/>
    <property type="evidence" value="ECO:0007669"/>
    <property type="project" value="UniProtKB-KW"/>
</dbReference>
<dbReference type="GO" id="GO:0016705">
    <property type="term" value="F:oxidoreductase activity, acting on paired donors, with incorporation or reduction of molecular oxygen"/>
    <property type="evidence" value="ECO:0007669"/>
    <property type="project" value="InterPro"/>
</dbReference>
<dbReference type="CDD" id="cd11072">
    <property type="entry name" value="CYP71-like"/>
    <property type="match status" value="1"/>
</dbReference>
<dbReference type="FunFam" id="1.10.630.10:FF:000008">
    <property type="entry name" value="Cytochrome P450 71D8"/>
    <property type="match status" value="1"/>
</dbReference>
<dbReference type="Gene3D" id="1.10.630.10">
    <property type="entry name" value="Cytochrome P450"/>
    <property type="match status" value="1"/>
</dbReference>
<dbReference type="InterPro" id="IPR001128">
    <property type="entry name" value="Cyt_P450"/>
</dbReference>
<dbReference type="InterPro" id="IPR017972">
    <property type="entry name" value="Cyt_P450_CS"/>
</dbReference>
<dbReference type="InterPro" id="IPR002401">
    <property type="entry name" value="Cyt_P450_E_grp-I"/>
</dbReference>
<dbReference type="InterPro" id="IPR036396">
    <property type="entry name" value="Cyt_P450_sf"/>
</dbReference>
<dbReference type="PANTHER" id="PTHR47955:SF8">
    <property type="entry name" value="CYTOCHROME P450 71D11-LIKE"/>
    <property type="match status" value="1"/>
</dbReference>
<dbReference type="PANTHER" id="PTHR47955">
    <property type="entry name" value="CYTOCHROME P450 FAMILY 71 PROTEIN"/>
    <property type="match status" value="1"/>
</dbReference>
<dbReference type="Pfam" id="PF00067">
    <property type="entry name" value="p450"/>
    <property type="match status" value="1"/>
</dbReference>
<dbReference type="PRINTS" id="PR00463">
    <property type="entry name" value="EP450I"/>
</dbReference>
<dbReference type="PRINTS" id="PR00385">
    <property type="entry name" value="P450"/>
</dbReference>
<dbReference type="SUPFAM" id="SSF48264">
    <property type="entry name" value="Cytochrome P450"/>
    <property type="match status" value="1"/>
</dbReference>
<dbReference type="PROSITE" id="PS00086">
    <property type="entry name" value="CYTOCHROME_P450"/>
    <property type="match status" value="1"/>
</dbReference>
<comment type="cofactor">
    <cofactor evidence="1">
        <name>heme</name>
        <dbReference type="ChEBI" id="CHEBI:30413"/>
    </cofactor>
</comment>
<comment type="similarity">
    <text evidence="2">Belongs to the cytochrome P450 family.</text>
</comment>
<gene>
    <name type="primary">CYP71D10</name>
</gene>
<keyword id="KW-0349">Heme</keyword>
<keyword id="KW-0408">Iron</keyword>
<keyword id="KW-0479">Metal-binding</keyword>
<keyword id="KW-0503">Monooxygenase</keyword>
<keyword id="KW-0560">Oxidoreductase</keyword>
<keyword id="KW-1185">Reference proteome</keyword>
<protein>
    <recommendedName>
        <fullName>Cytochrome P450 71D10</fullName>
        <ecNumber>1.14.-.-</ecNumber>
    </recommendedName>
</protein>